<keyword id="KW-0687">Ribonucleoprotein</keyword>
<keyword id="KW-0689">Ribosomal protein</keyword>
<keyword id="KW-0694">RNA-binding</keyword>
<keyword id="KW-0699">rRNA-binding</keyword>
<reference key="1">
    <citation type="submission" date="2005-09" db="EMBL/GenBank/DDBJ databases">
        <title>Complete genome sequence of Clostridium kluyveri and comparative genomics of Clostridia species.</title>
        <authorList>
            <person name="Inui M."/>
            <person name="Nonaka H."/>
            <person name="Shinoda Y."/>
            <person name="Ikenaga Y."/>
            <person name="Abe M."/>
            <person name="Naito K."/>
            <person name="Vertes A.A."/>
            <person name="Yukawa H."/>
        </authorList>
    </citation>
    <scope>NUCLEOTIDE SEQUENCE [LARGE SCALE GENOMIC DNA]</scope>
    <source>
        <strain>NBRC 12016</strain>
    </source>
</reference>
<comment type="function">
    <text evidence="1">This protein binds to 23S rRNA in the presence of protein L20.</text>
</comment>
<comment type="subunit">
    <text evidence="1">Part of the 50S ribosomal subunit. Contacts protein L20.</text>
</comment>
<comment type="similarity">
    <text evidence="1">Belongs to the bacterial ribosomal protein bL21 family.</text>
</comment>
<feature type="chain" id="PRO_1000166714" description="Large ribosomal subunit protein bL21">
    <location>
        <begin position="1"/>
        <end position="103"/>
    </location>
</feature>
<dbReference type="EMBL" id="AP009049">
    <property type="protein sequence ID" value="BAH05843.1"/>
    <property type="molecule type" value="Genomic_DNA"/>
</dbReference>
<dbReference type="RefSeq" id="WP_012101257.1">
    <property type="nucleotide sequence ID" value="NC_011837.1"/>
</dbReference>
<dbReference type="SMR" id="B9E018"/>
<dbReference type="KEGG" id="ckr:CKR_0792"/>
<dbReference type="HOGENOM" id="CLU_061463_3_2_9"/>
<dbReference type="Proteomes" id="UP000007969">
    <property type="component" value="Chromosome"/>
</dbReference>
<dbReference type="GO" id="GO:0005737">
    <property type="term" value="C:cytoplasm"/>
    <property type="evidence" value="ECO:0007669"/>
    <property type="project" value="UniProtKB-ARBA"/>
</dbReference>
<dbReference type="GO" id="GO:1990904">
    <property type="term" value="C:ribonucleoprotein complex"/>
    <property type="evidence" value="ECO:0007669"/>
    <property type="project" value="UniProtKB-KW"/>
</dbReference>
<dbReference type="GO" id="GO:0005840">
    <property type="term" value="C:ribosome"/>
    <property type="evidence" value="ECO:0007669"/>
    <property type="project" value="UniProtKB-KW"/>
</dbReference>
<dbReference type="GO" id="GO:0019843">
    <property type="term" value="F:rRNA binding"/>
    <property type="evidence" value="ECO:0007669"/>
    <property type="project" value="UniProtKB-UniRule"/>
</dbReference>
<dbReference type="GO" id="GO:0003735">
    <property type="term" value="F:structural constituent of ribosome"/>
    <property type="evidence" value="ECO:0007669"/>
    <property type="project" value="InterPro"/>
</dbReference>
<dbReference type="GO" id="GO:0006412">
    <property type="term" value="P:translation"/>
    <property type="evidence" value="ECO:0007669"/>
    <property type="project" value="UniProtKB-UniRule"/>
</dbReference>
<dbReference type="HAMAP" id="MF_01363">
    <property type="entry name" value="Ribosomal_bL21"/>
    <property type="match status" value="1"/>
</dbReference>
<dbReference type="InterPro" id="IPR028909">
    <property type="entry name" value="bL21-like"/>
</dbReference>
<dbReference type="InterPro" id="IPR036164">
    <property type="entry name" value="bL21-like_sf"/>
</dbReference>
<dbReference type="InterPro" id="IPR001787">
    <property type="entry name" value="Ribosomal_bL21"/>
</dbReference>
<dbReference type="InterPro" id="IPR018258">
    <property type="entry name" value="Ribosomal_bL21_CS"/>
</dbReference>
<dbReference type="NCBIfam" id="TIGR00061">
    <property type="entry name" value="L21"/>
    <property type="match status" value="1"/>
</dbReference>
<dbReference type="PANTHER" id="PTHR21349">
    <property type="entry name" value="50S RIBOSOMAL PROTEIN L21"/>
    <property type="match status" value="1"/>
</dbReference>
<dbReference type="PANTHER" id="PTHR21349:SF0">
    <property type="entry name" value="LARGE RIBOSOMAL SUBUNIT PROTEIN BL21M"/>
    <property type="match status" value="1"/>
</dbReference>
<dbReference type="Pfam" id="PF00829">
    <property type="entry name" value="Ribosomal_L21p"/>
    <property type="match status" value="1"/>
</dbReference>
<dbReference type="SUPFAM" id="SSF141091">
    <property type="entry name" value="L21p-like"/>
    <property type="match status" value="1"/>
</dbReference>
<dbReference type="PROSITE" id="PS01169">
    <property type="entry name" value="RIBOSOMAL_L21"/>
    <property type="match status" value="1"/>
</dbReference>
<gene>
    <name evidence="1" type="primary">rplU</name>
    <name type="ordered locus">CKR_0792</name>
</gene>
<accession>B9E018</accession>
<name>RL21_CLOK1</name>
<organism>
    <name type="scientific">Clostridium kluyveri (strain NBRC 12016)</name>
    <dbReference type="NCBI Taxonomy" id="583346"/>
    <lineage>
        <taxon>Bacteria</taxon>
        <taxon>Bacillati</taxon>
        <taxon>Bacillota</taxon>
        <taxon>Clostridia</taxon>
        <taxon>Eubacteriales</taxon>
        <taxon>Clostridiaceae</taxon>
        <taxon>Clostridium</taxon>
    </lineage>
</organism>
<sequence length="103" mass="11622">MYAVVATGGKQYKVSEGDIIYVEKLEAEVDSTIELDKVLMINKDEGLVVGKPVVEGAKVKAKVLKQGKAKKIIVFKYKPKKDYRKKQGHRQPYTKLQIEKIDA</sequence>
<evidence type="ECO:0000255" key="1">
    <source>
        <dbReference type="HAMAP-Rule" id="MF_01363"/>
    </source>
</evidence>
<evidence type="ECO:0000305" key="2"/>
<protein>
    <recommendedName>
        <fullName evidence="1">Large ribosomal subunit protein bL21</fullName>
    </recommendedName>
    <alternativeName>
        <fullName evidence="2">50S ribosomal protein L21</fullName>
    </alternativeName>
</protein>
<proteinExistence type="inferred from homology"/>